<gene>
    <name evidence="1" type="primary">eutC</name>
    <name type="ordered locus">FN0080</name>
</gene>
<reference key="1">
    <citation type="journal article" date="2002" name="J. Bacteriol.">
        <title>Genome sequence and analysis of the oral bacterium Fusobacterium nucleatum strain ATCC 25586.</title>
        <authorList>
            <person name="Kapatral V."/>
            <person name="Anderson I."/>
            <person name="Ivanova N."/>
            <person name="Reznik G."/>
            <person name="Los T."/>
            <person name="Lykidis A."/>
            <person name="Bhattacharyya A."/>
            <person name="Bartman A."/>
            <person name="Gardner W."/>
            <person name="Grechkin G."/>
            <person name="Zhu L."/>
            <person name="Vasieva O."/>
            <person name="Chu L."/>
            <person name="Kogan Y."/>
            <person name="Chaga O."/>
            <person name="Goltsman E."/>
            <person name="Bernal A."/>
            <person name="Larsen N."/>
            <person name="D'Souza M."/>
            <person name="Walunas T."/>
            <person name="Pusch G."/>
            <person name="Haselkorn R."/>
            <person name="Fonstein M."/>
            <person name="Kyrpides N.C."/>
            <person name="Overbeek R."/>
        </authorList>
    </citation>
    <scope>NUCLEOTIDE SEQUENCE [LARGE SCALE GENOMIC DNA]</scope>
    <source>
        <strain>ATCC 25586 / DSM 15643 / BCRC 10681 / CIP 101130 / JCM 8532 / KCTC 2640 / LMG 13131 / VPI 4355</strain>
    </source>
</reference>
<keyword id="KW-1283">Bacterial microcompartment</keyword>
<keyword id="KW-0846">Cobalamin</keyword>
<keyword id="KW-0170">Cobalt</keyword>
<keyword id="KW-0456">Lyase</keyword>
<keyword id="KW-1185">Reference proteome</keyword>
<comment type="function">
    <text evidence="1">Catalyzes the deamination of various vicinal amino-alcohols to oxo compounds. Allows this organism to utilize ethanolamine as the sole source of nitrogen and carbon in the presence of external vitamin B12.</text>
</comment>
<comment type="catalytic activity">
    <reaction evidence="1">
        <text>ethanolamine = acetaldehyde + NH4(+)</text>
        <dbReference type="Rhea" id="RHEA:15313"/>
        <dbReference type="ChEBI" id="CHEBI:15343"/>
        <dbReference type="ChEBI" id="CHEBI:28938"/>
        <dbReference type="ChEBI" id="CHEBI:57603"/>
        <dbReference type="EC" id="4.3.1.7"/>
    </reaction>
</comment>
<comment type="cofactor">
    <cofactor evidence="1">
        <name>adenosylcob(III)alamin</name>
        <dbReference type="ChEBI" id="CHEBI:18408"/>
    </cofactor>
    <text evidence="1">Binds between the large and small subunits.</text>
</comment>
<comment type="pathway">
    <text evidence="1">Amine and polyamine degradation; ethanolamine degradation.</text>
</comment>
<comment type="subunit">
    <text evidence="1">The basic unit is a heterodimer which dimerizes to form tetramers. The heterotetramers trimerize; 6 large subunits form a core ring with 6 small subunits projecting outwards.</text>
</comment>
<comment type="subcellular location">
    <subcellularLocation>
        <location evidence="1">Bacterial microcompartment</location>
    </subcellularLocation>
</comment>
<comment type="similarity">
    <text evidence="1">Belongs to the EutC family.</text>
</comment>
<organism>
    <name type="scientific">Fusobacterium nucleatum subsp. nucleatum (strain ATCC 25586 / DSM 15643 / BCRC 10681 / CIP 101130 / JCM 8532 / KCTC 2640 / LMG 13131 / VPI 4355)</name>
    <dbReference type="NCBI Taxonomy" id="190304"/>
    <lineage>
        <taxon>Bacteria</taxon>
        <taxon>Fusobacteriati</taxon>
        <taxon>Fusobacteriota</taxon>
        <taxon>Fusobacteriia</taxon>
        <taxon>Fusobacteriales</taxon>
        <taxon>Fusobacteriaceae</taxon>
        <taxon>Fusobacterium</taxon>
    </lineage>
</organism>
<protein>
    <recommendedName>
        <fullName evidence="1">Ethanolamine ammonia-lyase small subunit</fullName>
        <shortName evidence="1">EAL small subunit</shortName>
        <ecNumber evidence="1">4.3.1.7</ecNumber>
    </recommendedName>
</protein>
<evidence type="ECO:0000255" key="1">
    <source>
        <dbReference type="HAMAP-Rule" id="MF_00601"/>
    </source>
</evidence>
<dbReference type="EC" id="4.3.1.7" evidence="1"/>
<dbReference type="EMBL" id="AE009951">
    <property type="protein sequence ID" value="AAL94293.1"/>
    <property type="molecule type" value="Genomic_DNA"/>
</dbReference>
<dbReference type="RefSeq" id="NP_602994.1">
    <property type="nucleotide sequence ID" value="NC_003454.1"/>
</dbReference>
<dbReference type="RefSeq" id="WP_005904029.1">
    <property type="nucleotide sequence ID" value="NZ_OZ209243.1"/>
</dbReference>
<dbReference type="SMR" id="Q8RH35"/>
<dbReference type="STRING" id="190304.FN0080"/>
<dbReference type="PaxDb" id="190304-FN0080"/>
<dbReference type="DNASU" id="992979"/>
<dbReference type="EnsemblBacteria" id="AAL94293">
    <property type="protein sequence ID" value="AAL94293"/>
    <property type="gene ID" value="FN0080"/>
</dbReference>
<dbReference type="GeneID" id="79782790"/>
<dbReference type="KEGG" id="fnu:FN0080"/>
<dbReference type="PATRIC" id="fig|190304.8.peg.672"/>
<dbReference type="eggNOG" id="COG4302">
    <property type="taxonomic scope" value="Bacteria"/>
</dbReference>
<dbReference type="HOGENOM" id="CLU_068224_0_0_0"/>
<dbReference type="InParanoid" id="Q8RH35"/>
<dbReference type="BioCyc" id="FNUC190304:G1FZS-693-MONOMER"/>
<dbReference type="UniPathway" id="UPA00560"/>
<dbReference type="Proteomes" id="UP000002521">
    <property type="component" value="Chromosome"/>
</dbReference>
<dbReference type="GO" id="GO:0009350">
    <property type="term" value="C:ethanolamine ammonia-lyase complex"/>
    <property type="evidence" value="ECO:0000318"/>
    <property type="project" value="GO_Central"/>
</dbReference>
<dbReference type="GO" id="GO:0031471">
    <property type="term" value="C:ethanolamine degradation polyhedral organelle"/>
    <property type="evidence" value="ECO:0007669"/>
    <property type="project" value="UniProtKB-UniRule"/>
</dbReference>
<dbReference type="GO" id="GO:0031419">
    <property type="term" value="F:cobalamin binding"/>
    <property type="evidence" value="ECO:0007669"/>
    <property type="project" value="UniProtKB-UniRule"/>
</dbReference>
<dbReference type="GO" id="GO:0008851">
    <property type="term" value="F:ethanolamine ammonia-lyase activity"/>
    <property type="evidence" value="ECO:0007669"/>
    <property type="project" value="UniProtKB-UniRule"/>
</dbReference>
<dbReference type="GO" id="GO:0006520">
    <property type="term" value="P:amino acid metabolic process"/>
    <property type="evidence" value="ECO:0007669"/>
    <property type="project" value="InterPro"/>
</dbReference>
<dbReference type="GO" id="GO:0046336">
    <property type="term" value="P:ethanolamine catabolic process"/>
    <property type="evidence" value="ECO:0007669"/>
    <property type="project" value="UniProtKB-UniRule"/>
</dbReference>
<dbReference type="FunFam" id="1.10.30.40:FF:000001">
    <property type="entry name" value="Ethanolamine ammonia-lyase light chain"/>
    <property type="match status" value="1"/>
</dbReference>
<dbReference type="FunFam" id="3.40.50.11240:FF:000001">
    <property type="entry name" value="Ethanolamine ammonia-lyase light chain"/>
    <property type="match status" value="1"/>
</dbReference>
<dbReference type="Gene3D" id="3.40.50.11240">
    <property type="entry name" value="Ethanolamine ammonia-lyase light chain (EutC)"/>
    <property type="match status" value="1"/>
</dbReference>
<dbReference type="Gene3D" id="1.10.30.40">
    <property type="entry name" value="Ethanolamine ammonia-lyase light chain (EutC), N-terminal domain"/>
    <property type="match status" value="1"/>
</dbReference>
<dbReference type="HAMAP" id="MF_00601">
    <property type="entry name" value="EutC"/>
    <property type="match status" value="1"/>
</dbReference>
<dbReference type="InterPro" id="IPR009246">
    <property type="entry name" value="EutC"/>
</dbReference>
<dbReference type="InterPro" id="IPR042251">
    <property type="entry name" value="EutC_C"/>
</dbReference>
<dbReference type="InterPro" id="IPR042255">
    <property type="entry name" value="EutC_N"/>
</dbReference>
<dbReference type="NCBIfam" id="NF003971">
    <property type="entry name" value="PRK05465.1"/>
    <property type="match status" value="1"/>
</dbReference>
<dbReference type="PANTHER" id="PTHR39330">
    <property type="entry name" value="ETHANOLAMINE AMMONIA-LYASE LIGHT CHAIN"/>
    <property type="match status" value="1"/>
</dbReference>
<dbReference type="PANTHER" id="PTHR39330:SF1">
    <property type="entry name" value="ETHANOLAMINE AMMONIA-LYASE SMALL SUBUNIT"/>
    <property type="match status" value="1"/>
</dbReference>
<dbReference type="Pfam" id="PF05985">
    <property type="entry name" value="EutC"/>
    <property type="match status" value="1"/>
</dbReference>
<dbReference type="PIRSF" id="PIRSF018982">
    <property type="entry name" value="EutC"/>
    <property type="match status" value="1"/>
</dbReference>
<sequence length="295" mass="32140">MVSELELKEIIGKVLKEMAVEGKTEGQAVTETKKTSESHIEDGIIDDITKEDLREIVELKNATNKEEFLKYKRKTPARLGISRAGSRYTTHTMLRLRADHAAAQDAVLSSVNEDFLKANNLFIVKSRCEDKDQYITRPDLGRRLDEESVKTLKEKCVQNPTVQVFVADGLSSTAIEANIEDCLPALLNGLKSYGISVGTPFFAKLARVGLADDVSEVLGAEVTCVLIGERPGLATAESMSAYITYKGYVGIPEAKRTVVSNIHVKGTPAAEAGAHIAHIIKKVLDAKASGQDLKL</sequence>
<feature type="chain" id="PRO_0000205992" description="Ethanolamine ammonia-lyase small subunit">
    <location>
        <begin position="1"/>
        <end position="295"/>
    </location>
</feature>
<feature type="binding site" evidence="1">
    <location>
        <position position="208"/>
    </location>
    <ligand>
        <name>adenosylcob(III)alamin</name>
        <dbReference type="ChEBI" id="CHEBI:18408"/>
    </ligand>
</feature>
<feature type="binding site" evidence="1">
    <location>
        <position position="229"/>
    </location>
    <ligand>
        <name>adenosylcob(III)alamin</name>
        <dbReference type="ChEBI" id="CHEBI:18408"/>
    </ligand>
</feature>
<accession>Q8RH35</accession>
<proteinExistence type="inferred from homology"/>
<name>EUTC_FUSNN</name>